<proteinExistence type="evidence at protein level"/>
<gene>
    <name evidence="1" type="primary">rdgC</name>
    <name type="ordered locus">PA3263</name>
</gene>
<accession>Q9HYX7</accession>
<reference key="1">
    <citation type="journal article" date="2000" name="Nature">
        <title>Complete genome sequence of Pseudomonas aeruginosa PAO1, an opportunistic pathogen.</title>
        <authorList>
            <person name="Stover C.K."/>
            <person name="Pham X.-Q.T."/>
            <person name="Erwin A.L."/>
            <person name="Mizoguchi S.D."/>
            <person name="Warrener P."/>
            <person name="Hickey M.J."/>
            <person name="Brinkman F.S.L."/>
            <person name="Hufnagle W.O."/>
            <person name="Kowalik D.J."/>
            <person name="Lagrou M."/>
            <person name="Garber R.L."/>
            <person name="Goltry L."/>
            <person name="Tolentino E."/>
            <person name="Westbrock-Wadman S."/>
            <person name="Yuan Y."/>
            <person name="Brody L.L."/>
            <person name="Coulter S.N."/>
            <person name="Folger K.R."/>
            <person name="Kas A."/>
            <person name="Larbig K."/>
            <person name="Lim R.M."/>
            <person name="Smith K.A."/>
            <person name="Spencer D.H."/>
            <person name="Wong G.K.-S."/>
            <person name="Wu Z."/>
            <person name="Paulsen I.T."/>
            <person name="Reizer J."/>
            <person name="Saier M.H. Jr."/>
            <person name="Hancock R.E.W."/>
            <person name="Lory S."/>
            <person name="Olson M.V."/>
        </authorList>
    </citation>
    <scope>NUCLEOTIDE SEQUENCE [LARGE SCALE GENOMIC DNA]</scope>
    <source>
        <strain>ATCC 15692 / DSM 22644 / CIP 104116 / JCM 14847 / LMG 12228 / 1C / PRS 101 / PAO1</strain>
    </source>
</reference>
<keyword id="KW-0002">3D-structure</keyword>
<keyword id="KW-0963">Cytoplasm</keyword>
<keyword id="KW-0233">DNA recombination</keyword>
<keyword id="KW-1185">Reference proteome</keyword>
<protein>
    <recommendedName>
        <fullName evidence="1">Recombination-associated protein RdgC</fullName>
    </recommendedName>
</protein>
<evidence type="ECO:0000255" key="1">
    <source>
        <dbReference type="HAMAP-Rule" id="MF_00194"/>
    </source>
</evidence>
<evidence type="ECO:0007829" key="2">
    <source>
        <dbReference type="PDB" id="2OWY"/>
    </source>
</evidence>
<dbReference type="EMBL" id="AE004091">
    <property type="protein sequence ID" value="AAG06651.1"/>
    <property type="molecule type" value="Genomic_DNA"/>
</dbReference>
<dbReference type="PIR" id="A83239">
    <property type="entry name" value="A83239"/>
</dbReference>
<dbReference type="RefSeq" id="NP_251953.1">
    <property type="nucleotide sequence ID" value="NC_002516.2"/>
</dbReference>
<dbReference type="RefSeq" id="WP_003115570.1">
    <property type="nucleotide sequence ID" value="NZ_QZGE01000019.1"/>
</dbReference>
<dbReference type="PDB" id="2OWY">
    <property type="method" value="X-ray"/>
    <property type="resolution" value="2.50 A"/>
    <property type="chains" value="A/B=1-306"/>
</dbReference>
<dbReference type="PDBsum" id="2OWY"/>
<dbReference type="SMR" id="Q9HYX7"/>
<dbReference type="FunCoup" id="Q9HYX7">
    <property type="interactions" value="122"/>
</dbReference>
<dbReference type="STRING" id="208964.PA3263"/>
<dbReference type="PaxDb" id="208964-PA3263"/>
<dbReference type="DNASU" id="882426"/>
<dbReference type="GeneID" id="882426"/>
<dbReference type="KEGG" id="pae:PA3263"/>
<dbReference type="PATRIC" id="fig|208964.12.peg.3412"/>
<dbReference type="PseudoCAP" id="PA3263"/>
<dbReference type="HOGENOM" id="CLU_052038_1_1_6"/>
<dbReference type="InParanoid" id="Q9HYX7"/>
<dbReference type="OrthoDB" id="5290530at2"/>
<dbReference type="PhylomeDB" id="Q9HYX7"/>
<dbReference type="BioCyc" id="PAER208964:G1FZ6-3324-MONOMER"/>
<dbReference type="EvolutionaryTrace" id="Q9HYX7"/>
<dbReference type="Proteomes" id="UP000002438">
    <property type="component" value="Chromosome"/>
</dbReference>
<dbReference type="GO" id="GO:0043590">
    <property type="term" value="C:bacterial nucleoid"/>
    <property type="evidence" value="ECO:0000318"/>
    <property type="project" value="GO_Central"/>
</dbReference>
<dbReference type="GO" id="GO:0005737">
    <property type="term" value="C:cytoplasm"/>
    <property type="evidence" value="ECO:0007669"/>
    <property type="project" value="UniProtKB-UniRule"/>
</dbReference>
<dbReference type="GO" id="GO:0003690">
    <property type="term" value="F:double-stranded DNA binding"/>
    <property type="evidence" value="ECO:0000318"/>
    <property type="project" value="GO_Central"/>
</dbReference>
<dbReference type="GO" id="GO:0006310">
    <property type="term" value="P:DNA recombination"/>
    <property type="evidence" value="ECO:0007669"/>
    <property type="project" value="UniProtKB-UniRule"/>
</dbReference>
<dbReference type="GO" id="GO:0000018">
    <property type="term" value="P:regulation of DNA recombination"/>
    <property type="evidence" value="ECO:0000318"/>
    <property type="project" value="GO_Central"/>
</dbReference>
<dbReference type="HAMAP" id="MF_00194">
    <property type="entry name" value="RdgC"/>
    <property type="match status" value="1"/>
</dbReference>
<dbReference type="InterPro" id="IPR007476">
    <property type="entry name" value="RdgC"/>
</dbReference>
<dbReference type="NCBIfam" id="NF001461">
    <property type="entry name" value="PRK00321.1-2"/>
    <property type="match status" value="1"/>
</dbReference>
<dbReference type="NCBIfam" id="NF001462">
    <property type="entry name" value="PRK00321.1-3"/>
    <property type="match status" value="1"/>
</dbReference>
<dbReference type="NCBIfam" id="NF001464">
    <property type="entry name" value="PRK00321.1-5"/>
    <property type="match status" value="1"/>
</dbReference>
<dbReference type="PANTHER" id="PTHR38103">
    <property type="entry name" value="RECOMBINATION-ASSOCIATED PROTEIN RDGC"/>
    <property type="match status" value="1"/>
</dbReference>
<dbReference type="PANTHER" id="PTHR38103:SF1">
    <property type="entry name" value="RECOMBINATION-ASSOCIATED PROTEIN RDGC"/>
    <property type="match status" value="1"/>
</dbReference>
<dbReference type="Pfam" id="PF04381">
    <property type="entry name" value="RdgC"/>
    <property type="match status" value="1"/>
</dbReference>
<name>RDGC_PSEAE</name>
<sequence length="306" mass="34015">MWFRNLLVYRLTQDLQLDADSLEKALGEKSARPCASQELTTYGFTAPFGKGPDAPLVHVSQDFFLISARKEERILPGSVVRDALKEKVDEIEAQQMRKVYKKERDQLKDEIVQTLLPRAFIRRSSTFAAIAPSLGLILVDSASAKKAEDLLSTLREALGSLPVRPLSVKVAPTATLTDWVKTQEAAGDFHVLDECELRDTHEDGGVVRCKRQDLTSEEIQLHLTAGKLVTQLSLAWSDKLSFVLDDKLAVKRLRFEDLLQEQAEKDGGEDALGQLDASFTLMMLTFAEFLPALFEALGGEEIPQGV</sequence>
<comment type="function">
    <text evidence="1">May be involved in recombination.</text>
</comment>
<comment type="subcellular location">
    <subcellularLocation>
        <location evidence="1">Cytoplasm</location>
        <location evidence="1">Nucleoid</location>
    </subcellularLocation>
</comment>
<comment type="similarity">
    <text evidence="1">Belongs to the RdgC family.</text>
</comment>
<feature type="chain" id="PRO_0000211745" description="Recombination-associated protein RdgC">
    <location>
        <begin position="1"/>
        <end position="306"/>
    </location>
</feature>
<feature type="strand" evidence="2">
    <location>
        <begin position="6"/>
        <end position="13"/>
    </location>
</feature>
<feature type="helix" evidence="2">
    <location>
        <begin position="19"/>
        <end position="27"/>
    </location>
</feature>
<feature type="strand" evidence="2">
    <location>
        <begin position="39"/>
        <end position="44"/>
    </location>
</feature>
<feature type="strand" evidence="2">
    <location>
        <begin position="58"/>
        <end position="60"/>
    </location>
</feature>
<feature type="strand" evidence="2">
    <location>
        <begin position="63"/>
        <end position="73"/>
    </location>
</feature>
<feature type="helix" evidence="2">
    <location>
        <begin position="77"/>
        <end position="92"/>
    </location>
</feature>
<feature type="strand" evidence="2">
    <location>
        <begin position="95"/>
        <end position="97"/>
    </location>
</feature>
<feature type="helix" evidence="2">
    <location>
        <begin position="101"/>
        <end position="115"/>
    </location>
</feature>
<feature type="helix" evidence="2">
    <location>
        <begin position="116"/>
        <end position="118"/>
    </location>
</feature>
<feature type="strand" evidence="2">
    <location>
        <begin position="121"/>
        <end position="131"/>
    </location>
</feature>
<feature type="helix" evidence="2">
    <location>
        <begin position="132"/>
        <end position="134"/>
    </location>
</feature>
<feature type="strand" evidence="2">
    <location>
        <begin position="136"/>
        <end position="139"/>
    </location>
</feature>
<feature type="helix" evidence="2">
    <location>
        <begin position="144"/>
        <end position="158"/>
    </location>
</feature>
<feature type="strand" evidence="2">
    <location>
        <begin position="163"/>
        <end position="165"/>
    </location>
</feature>
<feature type="strand" evidence="2">
    <location>
        <begin position="168"/>
        <end position="170"/>
    </location>
</feature>
<feature type="helix" evidence="2">
    <location>
        <begin position="172"/>
        <end position="182"/>
    </location>
</feature>
<feature type="strand" evidence="2">
    <location>
        <begin position="189"/>
        <end position="198"/>
    </location>
</feature>
<feature type="strand" evidence="2">
    <location>
        <begin position="206"/>
        <end position="211"/>
    </location>
</feature>
<feature type="helix" evidence="2">
    <location>
        <begin position="217"/>
        <end position="224"/>
    </location>
</feature>
<feature type="strand" evidence="2">
    <location>
        <begin position="228"/>
        <end position="236"/>
    </location>
</feature>
<feature type="turn" evidence="2">
    <location>
        <begin position="237"/>
        <end position="239"/>
    </location>
</feature>
<feature type="strand" evidence="2">
    <location>
        <begin position="240"/>
        <end position="245"/>
    </location>
</feature>
<feature type="strand" evidence="2">
    <location>
        <begin position="250"/>
        <end position="255"/>
    </location>
</feature>
<feature type="helix" evidence="2">
    <location>
        <begin position="257"/>
        <end position="267"/>
    </location>
</feature>
<feature type="helix" evidence="2">
    <location>
        <begin position="271"/>
        <end position="296"/>
    </location>
</feature>
<organism>
    <name type="scientific">Pseudomonas aeruginosa (strain ATCC 15692 / DSM 22644 / CIP 104116 / JCM 14847 / LMG 12228 / 1C / PRS 101 / PAO1)</name>
    <dbReference type="NCBI Taxonomy" id="208964"/>
    <lineage>
        <taxon>Bacteria</taxon>
        <taxon>Pseudomonadati</taxon>
        <taxon>Pseudomonadota</taxon>
        <taxon>Gammaproteobacteria</taxon>
        <taxon>Pseudomonadales</taxon>
        <taxon>Pseudomonadaceae</taxon>
        <taxon>Pseudomonas</taxon>
    </lineage>
</organism>